<reference key="1">
    <citation type="journal article" date="2008" name="PLoS Genet.">
        <title>Genomic islands in the pathogenic filamentous fungus Aspergillus fumigatus.</title>
        <authorList>
            <person name="Fedorova N.D."/>
            <person name="Khaldi N."/>
            <person name="Joardar V.S."/>
            <person name="Maiti R."/>
            <person name="Amedeo P."/>
            <person name="Anderson M.J."/>
            <person name="Crabtree J."/>
            <person name="Silva J.C."/>
            <person name="Badger J.H."/>
            <person name="Albarraq A."/>
            <person name="Angiuoli S."/>
            <person name="Bussey H."/>
            <person name="Bowyer P."/>
            <person name="Cotty P.J."/>
            <person name="Dyer P.S."/>
            <person name="Egan A."/>
            <person name="Galens K."/>
            <person name="Fraser-Liggett C.M."/>
            <person name="Haas B.J."/>
            <person name="Inman J.M."/>
            <person name="Kent R."/>
            <person name="Lemieux S."/>
            <person name="Malavazi I."/>
            <person name="Orvis J."/>
            <person name="Roemer T."/>
            <person name="Ronning C.M."/>
            <person name="Sundaram J.P."/>
            <person name="Sutton G."/>
            <person name="Turner G."/>
            <person name="Venter J.C."/>
            <person name="White O.R."/>
            <person name="Whitty B.R."/>
            <person name="Youngman P."/>
            <person name="Wolfe K.H."/>
            <person name="Goldman G.H."/>
            <person name="Wortman J.R."/>
            <person name="Jiang B."/>
            <person name="Denning D.W."/>
            <person name="Nierman W.C."/>
        </authorList>
    </citation>
    <scope>NUCLEOTIDE SEQUENCE [LARGE SCALE GENOMIC DNA]</scope>
    <source>
        <strain>ATCC 1020 / DSM 3700 / CBS 544.65 / FGSC A1164 / JCM 1740 / NRRL 181 / WB 181</strain>
    </source>
</reference>
<keyword id="KW-0119">Carbohydrate metabolism</keyword>
<keyword id="KW-0136">Cellulose degradation</keyword>
<keyword id="KW-1015">Disulfide bond</keyword>
<keyword id="KW-0325">Glycoprotein</keyword>
<keyword id="KW-0326">Glycosidase</keyword>
<keyword id="KW-0378">Hydrolase</keyword>
<keyword id="KW-0624">Polysaccharide degradation</keyword>
<keyword id="KW-1185">Reference proteome</keyword>
<keyword id="KW-0964">Secreted</keyword>
<keyword id="KW-0732">Signal</keyword>
<comment type="function">
    <text evidence="1">The biological conversion of cellulose to glucose generally requires three types of hydrolytic enzymes: (1) Endoglucanases which cut internal beta-1,4-glucosidic bonds; (2) Exocellobiohydrolases that cut the disaccharide cellobiose from the non-reducing end of the cellulose polymer chain; (3) Beta-1,4-glucosidases which hydrolyze the cellobiose and other short cello-oligosaccharides to glucose.</text>
</comment>
<comment type="catalytic activity">
    <reaction>
        <text>Hydrolysis of (1-&gt;4)-beta-D-glucosidic linkages in cellulose and cellotetraose, releasing cellobiose from the non-reducing ends of the chains.</text>
        <dbReference type="EC" id="3.2.1.91"/>
    </reaction>
</comment>
<comment type="subcellular location">
    <subcellularLocation>
        <location evidence="5">Secreted</location>
    </subcellularLocation>
</comment>
<comment type="similarity">
    <text evidence="5">Belongs to the glycosyl hydrolase 7 (cellulase C) family.</text>
</comment>
<name>CBHB_NEOFI</name>
<proteinExistence type="inferred from homology"/>
<sequence>MLASTFSYRMYKTALILAALLGSGQAQQVGTSQAEVHPSMTWQSCTAGGSCTTNNGKVVIDANWRWVHKVGDYTNCYTGNTWDKTLCPDDATCASNCALEGANYQSTYGATTSGDSLRLNFVTTSQQKNIGSRLYMMKDDTTYEMFKLLNQEFTFDVDVSNLPCGLNGALYFVAMDADGGMSKYPTNKAGAKYGTGYCDSQCPRDLKFINGQANVEGWQPSSNDANAGTGNHGSCCAEMDIWEANSISTAFTPHPCDTPGQVMCTGDACGGTYSSDRYGGTCDPDGCDFNSFRQGNKTFYGPGMTVDTKSKFTVVTQFITDDGTASGTLKEIKRFYVQNGKVIPNSESTWSGVGGNSITNDYCTAQKSLFKDQNVFAKHGGMEGMGAALAQGMVLVMSLWDDHAANMLWLDSNYPTTASSSTPGVARGTCDISSGVPADVEANHPDASVVYSNIKVGPIGSTFNSGGSNPGGGTTTTAKPTTTTTTAGSPGGTGVAQHYGQCGGNGWQGPTTCASPYTCQKLNDFYSQCL</sequence>
<organism>
    <name type="scientific">Neosartorya fischeri (strain ATCC 1020 / DSM 3700 / CBS 544.65 / FGSC A1164 / JCM 1740 / NRRL 181 / WB 181)</name>
    <name type="common">Aspergillus fischerianus</name>
    <dbReference type="NCBI Taxonomy" id="331117"/>
    <lineage>
        <taxon>Eukaryota</taxon>
        <taxon>Fungi</taxon>
        <taxon>Dikarya</taxon>
        <taxon>Ascomycota</taxon>
        <taxon>Pezizomycotina</taxon>
        <taxon>Eurotiomycetes</taxon>
        <taxon>Eurotiomycetidae</taxon>
        <taxon>Eurotiales</taxon>
        <taxon>Aspergillaceae</taxon>
        <taxon>Aspergillus</taxon>
        <taxon>Aspergillus subgen. Fumigati</taxon>
    </lineage>
</organism>
<dbReference type="EC" id="3.2.1.91"/>
<dbReference type="EMBL" id="DS027698">
    <property type="protein sequence ID" value="EAW16381.1"/>
    <property type="molecule type" value="Genomic_DNA"/>
</dbReference>
<dbReference type="RefSeq" id="XP_001258278.1">
    <property type="nucleotide sequence ID" value="XM_001258277.1"/>
</dbReference>
<dbReference type="SMR" id="A1DNL0"/>
<dbReference type="STRING" id="331117.A1DNL0"/>
<dbReference type="CAZy" id="CBM1">
    <property type="family name" value="Carbohydrate-Binding Module Family 1"/>
</dbReference>
<dbReference type="CAZy" id="GH7">
    <property type="family name" value="Glycoside Hydrolase Family 7"/>
</dbReference>
<dbReference type="GlyCosmos" id="A1DNL0">
    <property type="glycosylation" value="1 site, No reported glycans"/>
</dbReference>
<dbReference type="EnsemblFungi" id="EAW16381">
    <property type="protein sequence ID" value="EAW16381"/>
    <property type="gene ID" value="NFIA_057300"/>
</dbReference>
<dbReference type="GeneID" id="4584793"/>
<dbReference type="KEGG" id="nfi:NFIA_057300"/>
<dbReference type="VEuPathDB" id="FungiDB:NFIA_057300"/>
<dbReference type="eggNOG" id="ENOG502QPHV">
    <property type="taxonomic scope" value="Eukaryota"/>
</dbReference>
<dbReference type="HOGENOM" id="CLU_020817_3_2_1"/>
<dbReference type="OMA" id="CGFNGAL"/>
<dbReference type="OrthoDB" id="412382at2759"/>
<dbReference type="Proteomes" id="UP000006702">
    <property type="component" value="Unassembled WGS sequence"/>
</dbReference>
<dbReference type="GO" id="GO:0005576">
    <property type="term" value="C:extracellular region"/>
    <property type="evidence" value="ECO:0007669"/>
    <property type="project" value="UniProtKB-SubCell"/>
</dbReference>
<dbReference type="GO" id="GO:0016162">
    <property type="term" value="F:cellulose 1,4-beta-cellobiosidase activity"/>
    <property type="evidence" value="ECO:0007669"/>
    <property type="project" value="UniProtKB-EC"/>
</dbReference>
<dbReference type="GO" id="GO:0030248">
    <property type="term" value="F:cellulose binding"/>
    <property type="evidence" value="ECO:0007669"/>
    <property type="project" value="InterPro"/>
</dbReference>
<dbReference type="GO" id="GO:0030245">
    <property type="term" value="P:cellulose catabolic process"/>
    <property type="evidence" value="ECO:0007669"/>
    <property type="project" value="UniProtKB-KW"/>
</dbReference>
<dbReference type="CDD" id="cd07999">
    <property type="entry name" value="GH7_CBH_EG"/>
    <property type="match status" value="1"/>
</dbReference>
<dbReference type="FunFam" id="2.70.100.10:FF:000001">
    <property type="entry name" value="Glucanase"/>
    <property type="match status" value="1"/>
</dbReference>
<dbReference type="Gene3D" id="2.70.100.10">
    <property type="entry name" value="Glycoside hydrolase, family 7, domain"/>
    <property type="match status" value="1"/>
</dbReference>
<dbReference type="InterPro" id="IPR035971">
    <property type="entry name" value="CBD_sf"/>
</dbReference>
<dbReference type="InterPro" id="IPR000254">
    <property type="entry name" value="Cellulose-bd_dom_fun"/>
</dbReference>
<dbReference type="InterPro" id="IPR013320">
    <property type="entry name" value="ConA-like_dom_sf"/>
</dbReference>
<dbReference type="InterPro" id="IPR001722">
    <property type="entry name" value="Glyco_hydro_7"/>
</dbReference>
<dbReference type="InterPro" id="IPR037019">
    <property type="entry name" value="Glyco_hydro_7_sf"/>
</dbReference>
<dbReference type="PANTHER" id="PTHR33753">
    <property type="entry name" value="1,4-BETA-D-GLUCAN CELLOBIOHYDROLASE B"/>
    <property type="match status" value="1"/>
</dbReference>
<dbReference type="PANTHER" id="PTHR33753:SF2">
    <property type="entry name" value="GLYCOSIDE HYDROLASE FAMILY 7 PROTEIN"/>
    <property type="match status" value="1"/>
</dbReference>
<dbReference type="Pfam" id="PF00734">
    <property type="entry name" value="CBM_1"/>
    <property type="match status" value="1"/>
</dbReference>
<dbReference type="Pfam" id="PF00840">
    <property type="entry name" value="Glyco_hydro_7"/>
    <property type="match status" value="1"/>
</dbReference>
<dbReference type="PRINTS" id="PR00734">
    <property type="entry name" value="GLHYDRLASE7"/>
</dbReference>
<dbReference type="SMART" id="SM00236">
    <property type="entry name" value="fCBD"/>
    <property type="match status" value="1"/>
</dbReference>
<dbReference type="SUPFAM" id="SSF57180">
    <property type="entry name" value="Cellulose-binding domain"/>
    <property type="match status" value="1"/>
</dbReference>
<dbReference type="SUPFAM" id="SSF49899">
    <property type="entry name" value="Concanavalin A-like lectins/glucanases"/>
    <property type="match status" value="1"/>
</dbReference>
<dbReference type="PROSITE" id="PS00562">
    <property type="entry name" value="CBM1_1"/>
    <property type="match status" value="1"/>
</dbReference>
<dbReference type="PROSITE" id="PS51164">
    <property type="entry name" value="CBM1_2"/>
    <property type="match status" value="1"/>
</dbReference>
<accession>A1DNL0</accession>
<evidence type="ECO:0000250" key="1"/>
<evidence type="ECO:0000255" key="2"/>
<evidence type="ECO:0000255" key="3">
    <source>
        <dbReference type="PROSITE-ProRule" id="PRU00597"/>
    </source>
</evidence>
<evidence type="ECO:0000256" key="4">
    <source>
        <dbReference type="SAM" id="MobiDB-lite"/>
    </source>
</evidence>
<evidence type="ECO:0000305" key="5"/>
<feature type="signal peptide" evidence="2">
    <location>
        <begin position="1"/>
        <end position="26"/>
    </location>
</feature>
<feature type="chain" id="PRO_0000393551" description="Probable 1,4-beta-D-glucan cellobiohydrolase B">
    <location>
        <begin position="27"/>
        <end position="530"/>
    </location>
</feature>
<feature type="domain" description="CBM1" evidence="3">
    <location>
        <begin position="494"/>
        <end position="530"/>
    </location>
</feature>
<feature type="region of interest" description="Catalytic">
    <location>
        <begin position="27"/>
        <end position="461"/>
    </location>
</feature>
<feature type="region of interest" description="Ser/Thr-rich linker">
    <location>
        <begin position="462"/>
        <end position="494"/>
    </location>
</feature>
<feature type="region of interest" description="Disordered" evidence="4">
    <location>
        <begin position="462"/>
        <end position="492"/>
    </location>
</feature>
<feature type="compositionally biased region" description="Low complexity" evidence="4">
    <location>
        <begin position="475"/>
        <end position="488"/>
    </location>
</feature>
<feature type="active site" description="Nucleophile" evidence="1">
    <location>
        <position position="238"/>
    </location>
</feature>
<feature type="active site" description="Proton donor" evidence="1">
    <location>
        <position position="243"/>
    </location>
</feature>
<feature type="glycosylation site" description="N-linked (GlcNAc...) asparagine" evidence="2">
    <location>
        <position position="296"/>
    </location>
</feature>
<feature type="disulfide bond" evidence="1">
    <location>
        <begin position="502"/>
        <end position="519"/>
    </location>
</feature>
<feature type="disulfide bond" evidence="1">
    <location>
        <begin position="513"/>
        <end position="529"/>
    </location>
</feature>
<gene>
    <name type="primary">cbhB</name>
    <name type="ORF">NFIA_057300</name>
</gene>
<protein>
    <recommendedName>
        <fullName>Probable 1,4-beta-D-glucan cellobiohydrolase B</fullName>
        <ecNumber>3.2.1.91</ecNumber>
    </recommendedName>
    <alternativeName>
        <fullName>Beta-glucancellobiohydrolase B</fullName>
    </alternativeName>
    <alternativeName>
        <fullName>Exocellobiohydrolase B</fullName>
    </alternativeName>
    <alternativeName>
        <fullName>Exoglucanase B</fullName>
    </alternativeName>
</protein>